<protein>
    <recommendedName>
        <fullName evidence="1">Enolase</fullName>
        <ecNumber evidence="1">4.2.1.11</ecNumber>
    </recommendedName>
    <alternativeName>
        <fullName evidence="1">2-phospho-D-glycerate hydro-lyase</fullName>
    </alternativeName>
    <alternativeName>
        <fullName evidence="1">2-phosphoglycerate dehydratase</fullName>
    </alternativeName>
</protein>
<proteinExistence type="inferred from homology"/>
<accession>B8E8T1</accession>
<evidence type="ECO:0000255" key="1">
    <source>
        <dbReference type="HAMAP-Rule" id="MF_00318"/>
    </source>
</evidence>
<comment type="function">
    <text evidence="1">Catalyzes the reversible conversion of 2-phosphoglycerate (2-PG) into phosphoenolpyruvate (PEP). It is essential for the degradation of carbohydrates via glycolysis.</text>
</comment>
<comment type="catalytic activity">
    <reaction evidence="1">
        <text>(2R)-2-phosphoglycerate = phosphoenolpyruvate + H2O</text>
        <dbReference type="Rhea" id="RHEA:10164"/>
        <dbReference type="ChEBI" id="CHEBI:15377"/>
        <dbReference type="ChEBI" id="CHEBI:58289"/>
        <dbReference type="ChEBI" id="CHEBI:58702"/>
        <dbReference type="EC" id="4.2.1.11"/>
    </reaction>
</comment>
<comment type="cofactor">
    <cofactor evidence="1">
        <name>Mg(2+)</name>
        <dbReference type="ChEBI" id="CHEBI:18420"/>
    </cofactor>
    <text evidence="1">Binds a second Mg(2+) ion via substrate during catalysis.</text>
</comment>
<comment type="pathway">
    <text evidence="1">Carbohydrate degradation; glycolysis; pyruvate from D-glyceraldehyde 3-phosphate: step 4/5.</text>
</comment>
<comment type="subunit">
    <text evidence="1">Component of the RNA degradosome, a multiprotein complex involved in RNA processing and mRNA degradation.</text>
</comment>
<comment type="subcellular location">
    <subcellularLocation>
        <location evidence="1">Cytoplasm</location>
    </subcellularLocation>
    <subcellularLocation>
        <location evidence="1">Secreted</location>
    </subcellularLocation>
    <subcellularLocation>
        <location evidence="1">Cell surface</location>
    </subcellularLocation>
    <text evidence="1">Fractions of enolase are present in both the cytoplasm and on the cell surface.</text>
</comment>
<comment type="similarity">
    <text evidence="1">Belongs to the enolase family.</text>
</comment>
<name>ENO_SHEB2</name>
<organism>
    <name type="scientific">Shewanella baltica (strain OS223)</name>
    <dbReference type="NCBI Taxonomy" id="407976"/>
    <lineage>
        <taxon>Bacteria</taxon>
        <taxon>Pseudomonadati</taxon>
        <taxon>Pseudomonadota</taxon>
        <taxon>Gammaproteobacteria</taxon>
        <taxon>Alteromonadales</taxon>
        <taxon>Shewanellaceae</taxon>
        <taxon>Shewanella</taxon>
    </lineage>
</organism>
<reference key="1">
    <citation type="submission" date="2008-12" db="EMBL/GenBank/DDBJ databases">
        <title>Complete sequence of chromosome of Shewanella baltica OS223.</title>
        <authorList>
            <consortium name="US DOE Joint Genome Institute"/>
            <person name="Lucas S."/>
            <person name="Copeland A."/>
            <person name="Lapidus A."/>
            <person name="Glavina del Rio T."/>
            <person name="Dalin E."/>
            <person name="Tice H."/>
            <person name="Bruce D."/>
            <person name="Goodwin L."/>
            <person name="Pitluck S."/>
            <person name="Chertkov O."/>
            <person name="Meincke L."/>
            <person name="Brettin T."/>
            <person name="Detter J.C."/>
            <person name="Han C."/>
            <person name="Kuske C.R."/>
            <person name="Larimer F."/>
            <person name="Land M."/>
            <person name="Hauser L."/>
            <person name="Kyrpides N."/>
            <person name="Ovchinnikova G."/>
            <person name="Brettar I."/>
            <person name="Rodrigues J."/>
            <person name="Konstantinidis K."/>
            <person name="Tiedje J."/>
        </authorList>
    </citation>
    <scope>NUCLEOTIDE SEQUENCE [LARGE SCALE GENOMIC DNA]</scope>
    <source>
        <strain>OS223</strain>
    </source>
</reference>
<gene>
    <name evidence="1" type="primary">eno</name>
    <name type="ordered locus">Sbal223_1237</name>
</gene>
<feature type="chain" id="PRO_1000133019" description="Enolase">
    <location>
        <begin position="1"/>
        <end position="431"/>
    </location>
</feature>
<feature type="active site" description="Proton donor" evidence="1">
    <location>
        <position position="209"/>
    </location>
</feature>
<feature type="active site" description="Proton acceptor" evidence="1">
    <location>
        <position position="341"/>
    </location>
</feature>
<feature type="binding site" evidence="1">
    <location>
        <position position="167"/>
    </location>
    <ligand>
        <name>(2R)-2-phosphoglycerate</name>
        <dbReference type="ChEBI" id="CHEBI:58289"/>
    </ligand>
</feature>
<feature type="binding site" evidence="1">
    <location>
        <position position="246"/>
    </location>
    <ligand>
        <name>Mg(2+)</name>
        <dbReference type="ChEBI" id="CHEBI:18420"/>
    </ligand>
</feature>
<feature type="binding site" evidence="1">
    <location>
        <position position="289"/>
    </location>
    <ligand>
        <name>Mg(2+)</name>
        <dbReference type="ChEBI" id="CHEBI:18420"/>
    </ligand>
</feature>
<feature type="binding site" evidence="1">
    <location>
        <position position="316"/>
    </location>
    <ligand>
        <name>Mg(2+)</name>
        <dbReference type="ChEBI" id="CHEBI:18420"/>
    </ligand>
</feature>
<feature type="binding site" evidence="1">
    <location>
        <position position="341"/>
    </location>
    <ligand>
        <name>(2R)-2-phosphoglycerate</name>
        <dbReference type="ChEBI" id="CHEBI:58289"/>
    </ligand>
</feature>
<feature type="binding site" evidence="1">
    <location>
        <position position="370"/>
    </location>
    <ligand>
        <name>(2R)-2-phosphoglycerate</name>
        <dbReference type="ChEBI" id="CHEBI:58289"/>
    </ligand>
</feature>
<feature type="binding site" evidence="1">
    <location>
        <position position="371"/>
    </location>
    <ligand>
        <name>(2R)-2-phosphoglycerate</name>
        <dbReference type="ChEBI" id="CHEBI:58289"/>
    </ligand>
</feature>
<feature type="binding site" evidence="1">
    <location>
        <position position="392"/>
    </location>
    <ligand>
        <name>(2R)-2-phosphoglycerate</name>
        <dbReference type="ChEBI" id="CHEBI:58289"/>
    </ligand>
</feature>
<keyword id="KW-0963">Cytoplasm</keyword>
<keyword id="KW-0324">Glycolysis</keyword>
<keyword id="KW-0456">Lyase</keyword>
<keyword id="KW-0460">Magnesium</keyword>
<keyword id="KW-0479">Metal-binding</keyword>
<keyword id="KW-0964">Secreted</keyword>
<dbReference type="EC" id="4.2.1.11" evidence="1"/>
<dbReference type="EMBL" id="CP001252">
    <property type="protein sequence ID" value="ACK45747.1"/>
    <property type="molecule type" value="Genomic_DNA"/>
</dbReference>
<dbReference type="RefSeq" id="WP_012089811.1">
    <property type="nucleotide sequence ID" value="NC_011663.1"/>
</dbReference>
<dbReference type="SMR" id="B8E8T1"/>
<dbReference type="KEGG" id="sbp:Sbal223_1237"/>
<dbReference type="HOGENOM" id="CLU_031223_2_1_6"/>
<dbReference type="UniPathway" id="UPA00109">
    <property type="reaction ID" value="UER00187"/>
</dbReference>
<dbReference type="Proteomes" id="UP000002507">
    <property type="component" value="Chromosome"/>
</dbReference>
<dbReference type="GO" id="GO:0009986">
    <property type="term" value="C:cell surface"/>
    <property type="evidence" value="ECO:0007669"/>
    <property type="project" value="UniProtKB-SubCell"/>
</dbReference>
<dbReference type="GO" id="GO:0005576">
    <property type="term" value="C:extracellular region"/>
    <property type="evidence" value="ECO:0007669"/>
    <property type="project" value="UniProtKB-SubCell"/>
</dbReference>
<dbReference type="GO" id="GO:0000015">
    <property type="term" value="C:phosphopyruvate hydratase complex"/>
    <property type="evidence" value="ECO:0007669"/>
    <property type="project" value="InterPro"/>
</dbReference>
<dbReference type="GO" id="GO:0000287">
    <property type="term" value="F:magnesium ion binding"/>
    <property type="evidence" value="ECO:0007669"/>
    <property type="project" value="UniProtKB-UniRule"/>
</dbReference>
<dbReference type="GO" id="GO:0004634">
    <property type="term" value="F:phosphopyruvate hydratase activity"/>
    <property type="evidence" value="ECO:0007669"/>
    <property type="project" value="UniProtKB-UniRule"/>
</dbReference>
<dbReference type="GO" id="GO:0006096">
    <property type="term" value="P:glycolytic process"/>
    <property type="evidence" value="ECO:0007669"/>
    <property type="project" value="UniProtKB-UniRule"/>
</dbReference>
<dbReference type="CDD" id="cd03313">
    <property type="entry name" value="enolase"/>
    <property type="match status" value="1"/>
</dbReference>
<dbReference type="FunFam" id="3.20.20.120:FF:000001">
    <property type="entry name" value="Enolase"/>
    <property type="match status" value="1"/>
</dbReference>
<dbReference type="FunFam" id="3.30.390.10:FF:000001">
    <property type="entry name" value="Enolase"/>
    <property type="match status" value="1"/>
</dbReference>
<dbReference type="Gene3D" id="3.20.20.120">
    <property type="entry name" value="Enolase-like C-terminal domain"/>
    <property type="match status" value="1"/>
</dbReference>
<dbReference type="Gene3D" id="3.30.390.10">
    <property type="entry name" value="Enolase-like, N-terminal domain"/>
    <property type="match status" value="1"/>
</dbReference>
<dbReference type="HAMAP" id="MF_00318">
    <property type="entry name" value="Enolase"/>
    <property type="match status" value="1"/>
</dbReference>
<dbReference type="InterPro" id="IPR000941">
    <property type="entry name" value="Enolase"/>
</dbReference>
<dbReference type="InterPro" id="IPR036849">
    <property type="entry name" value="Enolase-like_C_sf"/>
</dbReference>
<dbReference type="InterPro" id="IPR029017">
    <property type="entry name" value="Enolase-like_N"/>
</dbReference>
<dbReference type="InterPro" id="IPR020810">
    <property type="entry name" value="Enolase_C"/>
</dbReference>
<dbReference type="InterPro" id="IPR020809">
    <property type="entry name" value="Enolase_CS"/>
</dbReference>
<dbReference type="InterPro" id="IPR020811">
    <property type="entry name" value="Enolase_N"/>
</dbReference>
<dbReference type="NCBIfam" id="TIGR01060">
    <property type="entry name" value="eno"/>
    <property type="match status" value="1"/>
</dbReference>
<dbReference type="PANTHER" id="PTHR11902">
    <property type="entry name" value="ENOLASE"/>
    <property type="match status" value="1"/>
</dbReference>
<dbReference type="PANTHER" id="PTHR11902:SF1">
    <property type="entry name" value="ENOLASE"/>
    <property type="match status" value="1"/>
</dbReference>
<dbReference type="Pfam" id="PF00113">
    <property type="entry name" value="Enolase_C"/>
    <property type="match status" value="1"/>
</dbReference>
<dbReference type="Pfam" id="PF03952">
    <property type="entry name" value="Enolase_N"/>
    <property type="match status" value="1"/>
</dbReference>
<dbReference type="PIRSF" id="PIRSF001400">
    <property type="entry name" value="Enolase"/>
    <property type="match status" value="1"/>
</dbReference>
<dbReference type="PRINTS" id="PR00148">
    <property type="entry name" value="ENOLASE"/>
</dbReference>
<dbReference type="SFLD" id="SFLDF00002">
    <property type="entry name" value="enolase"/>
    <property type="match status" value="1"/>
</dbReference>
<dbReference type="SFLD" id="SFLDG00178">
    <property type="entry name" value="enolase"/>
    <property type="match status" value="1"/>
</dbReference>
<dbReference type="SMART" id="SM01192">
    <property type="entry name" value="Enolase_C"/>
    <property type="match status" value="1"/>
</dbReference>
<dbReference type="SMART" id="SM01193">
    <property type="entry name" value="Enolase_N"/>
    <property type="match status" value="1"/>
</dbReference>
<dbReference type="SUPFAM" id="SSF51604">
    <property type="entry name" value="Enolase C-terminal domain-like"/>
    <property type="match status" value="1"/>
</dbReference>
<dbReference type="SUPFAM" id="SSF54826">
    <property type="entry name" value="Enolase N-terminal domain-like"/>
    <property type="match status" value="1"/>
</dbReference>
<dbReference type="PROSITE" id="PS00164">
    <property type="entry name" value="ENOLASE"/>
    <property type="match status" value="1"/>
</dbReference>
<sequence>MAKIINVIGREIMDSRGNPTVEAEVHLEGGFVGMAAAPSGASTGSREALELRDGDKSRYLGKGVLTAVANVNDLIRTALLGKDATAQAELDQIMIDLDGTENKDKLGANAILAVSLAAAKAAAAFKGIPLYAHIAELNGTPGQYSMPVPMMNILNGGEHADNNVDIQEFMVQPVGAKTFREALRMGAEIFHTLKKVLHDKGLSTSVGDEGGFAPNLASNADALAIIKEAVELAGYKLGSDVTLALDCAASEFYKDGKYDLAGEGKVFDSNGFSDFLKSLADQYPIVSIEDGLDESDWDGWAYQTQIMGDKIQLVGDDLFVTNTKILTRGIENGIANSILIKFNQIGSLTETLAAIRMAKEAGYTAVISHRSGETEDSTIADLAVGTAAGQIKTGSLCRSDRVAKYNQLLRIEEQLGEKAPYRGLKEIKGQA</sequence>